<sequence length="112" mass="12191">MEILMSITAGVLFMVGTYLILTKSLLRVVVGLILLSHGAHLLLLTMAGLQRGAPPLLHLEATTYSDPLPQALILTAIVISFGVTSFLLVLAYRTYKEHKTDDLDQLRGSADE</sequence>
<evidence type="ECO:0000250" key="1"/>
<evidence type="ECO:0000255" key="2"/>
<evidence type="ECO:0000305" key="3"/>
<evidence type="ECO:0007829" key="4">
    <source>
        <dbReference type="PDB" id="7QRU"/>
    </source>
</evidence>
<feature type="chain" id="PRO_0000089154" description="Na(+)/H(+) antiporter subunit C">
    <location>
        <begin position="1"/>
        <end position="112"/>
    </location>
</feature>
<feature type="transmembrane region" description="Helical" evidence="2">
    <location>
        <begin position="4"/>
        <end position="21"/>
    </location>
</feature>
<feature type="transmembrane region" description="Helical" evidence="2">
    <location>
        <begin position="28"/>
        <end position="50"/>
    </location>
</feature>
<feature type="transmembrane region" description="Helical" evidence="2">
    <location>
        <begin position="70"/>
        <end position="92"/>
    </location>
</feature>
<feature type="helix" evidence="4">
    <location>
        <begin position="2"/>
        <end position="20"/>
    </location>
</feature>
<feature type="strand" evidence="4">
    <location>
        <begin position="22"/>
        <end position="24"/>
    </location>
</feature>
<feature type="helix" evidence="4">
    <location>
        <begin position="25"/>
        <end position="46"/>
    </location>
</feature>
<feature type="helix" evidence="4">
    <location>
        <begin position="57"/>
        <end position="59"/>
    </location>
</feature>
<feature type="strand" evidence="4">
    <location>
        <begin position="62"/>
        <end position="64"/>
    </location>
</feature>
<feature type="helix" evidence="4">
    <location>
        <begin position="67"/>
        <end position="98"/>
    </location>
</feature>
<feature type="helix" evidence="4">
    <location>
        <begin position="103"/>
        <end position="106"/>
    </location>
</feature>
<name>MRPC_ALKPO</name>
<proteinExistence type="evidence at protein level"/>
<reference key="1">
    <citation type="journal article" date="2001" name="FEBS Lett.">
        <title>Mrp-dependent Na(+)/H(+) antiporters of Bacillus exhibit characteristics that are unanticipated for completely secondary active transporters.</title>
        <authorList>
            <person name="Ito M."/>
            <person name="Guffanti A.A."/>
            <person name="Krulwich T.A."/>
        </authorList>
    </citation>
    <scope>NUCLEOTIDE SEQUENCE [GENOMIC DNA]</scope>
    <scope>CHARACTERIZATION</scope>
</reference>
<reference key="2">
    <citation type="journal article" date="2011" name="Environ. Microbiol.">
        <title>Genome of alkaliphilic Bacillus pseudofirmus OF4 reveals adaptations that support the ability to grow in an external pH range from 7.5 to 11.4.</title>
        <authorList>
            <person name="Janto B."/>
            <person name="Ahmed A."/>
            <person name="Ito M."/>
            <person name="Liu J."/>
            <person name="Hicks D.B."/>
            <person name="Pagni S."/>
            <person name="Fackelmayer O.J."/>
            <person name="Smith T.A."/>
            <person name="Earl J."/>
            <person name="Elbourne L.D."/>
            <person name="Hassan K."/>
            <person name="Paulsen I.T."/>
            <person name="Kolsto A.B."/>
            <person name="Tourasse N.J."/>
            <person name="Ehrlich G.D."/>
            <person name="Boissy R."/>
            <person name="Ivey D.M."/>
            <person name="Li G."/>
            <person name="Xue Y."/>
            <person name="Ma Y."/>
            <person name="Hu F.Z."/>
            <person name="Krulwich T.A."/>
        </authorList>
    </citation>
    <scope>NUCLEOTIDE SEQUENCE [LARGE SCALE GENOMIC DNA]</scope>
    <source>
        <strain>ATCC BAA-2126 / JCM 17055 / OF4</strain>
    </source>
</reference>
<reference key="3">
    <citation type="journal article" date="2007" name="J. Bacteriol.">
        <title>Catalytic properties of Staphylococcus aureus and Bacillus members of the secondary cation/proton antiporter-3 (Mrp) family are revealed by an optimized assay in an Escherichia coli host.</title>
        <authorList>
            <person name="Swartz T.H."/>
            <person name="Ito M."/>
            <person name="Ohira T."/>
            <person name="Natsui S."/>
            <person name="Hicks D.B."/>
            <person name="Krulwich T.A."/>
        </authorList>
    </citation>
    <scope>CHARACTERIZATION</scope>
    <scope>PROBABLE FUNCTION IN ELECTROGENIC ANTIPORTER ACTIVITY</scope>
</reference>
<comment type="function">
    <text>Mnh complex is a Na(+)Li(+)/H(+) antiporter involved in Na(+) and/or Li(+) excretion and Na(+) resistance. Na(+)/H(+) antiport consumes a transmembrane electrical potential, and is thus inferred to be electrogenic. Does not transport K(+), Ca(2+) or Mg(2+).</text>
</comment>
<comment type="subunit">
    <text evidence="1">Forms a heterooligomeric complex that consists of seven subunits: MrpA, MrpB, MrpC, MrpD, MrpE, MrpF and MrpG.</text>
</comment>
<comment type="subcellular location">
    <subcellularLocation>
        <location evidence="3">Cell membrane</location>
        <topology evidence="3">Multi-pass membrane protein</topology>
    </subcellularLocation>
</comment>
<comment type="miscellaneous">
    <text>Mrp-dependent antiport apparently occurs by a secondary, proton motive force-dependent mechanism, but the similarity of several Mrp proteins to membrane-embedded subunits of energy-coupled NADH dehydrogenase complexes raises the possibility that there is a capacity for electron transport that could provide a primary energy coupling option for Mrp functions.</text>
</comment>
<comment type="similarity">
    <text evidence="3">Belongs to the CPA3 antiporters (TC 2.A.63) subunit C family.</text>
</comment>
<protein>
    <recommendedName>
        <fullName>Na(+)/H(+) antiporter subunit C</fullName>
    </recommendedName>
    <alternativeName>
        <fullName>Mrp complex subunit C</fullName>
    </alternativeName>
    <alternativeName>
        <fullName>Multiple resistance and pH homeostasis protein C</fullName>
    </alternativeName>
</protein>
<keyword id="KW-0002">3D-structure</keyword>
<keyword id="KW-0050">Antiport</keyword>
<keyword id="KW-1003">Cell membrane</keyword>
<keyword id="KW-0375">Hydrogen ion transport</keyword>
<keyword id="KW-0406">Ion transport</keyword>
<keyword id="KW-0472">Membrane</keyword>
<keyword id="KW-1185">Reference proteome</keyword>
<keyword id="KW-0915">Sodium</keyword>
<keyword id="KW-0739">Sodium transport</keyword>
<keyword id="KW-0812">Transmembrane</keyword>
<keyword id="KW-1133">Transmembrane helix</keyword>
<keyword id="KW-0813">Transport</keyword>
<dbReference type="EMBL" id="AF097740">
    <property type="protein sequence ID" value="AAF21814.1"/>
    <property type="molecule type" value="Genomic_DNA"/>
</dbReference>
<dbReference type="EMBL" id="CP001878">
    <property type="protein sequence ID" value="ADC50691.1"/>
    <property type="molecule type" value="Genomic_DNA"/>
</dbReference>
<dbReference type="RefSeq" id="WP_012958054.1">
    <property type="nucleotide sequence ID" value="NC_013791.2"/>
</dbReference>
<dbReference type="PDB" id="7QRU">
    <property type="method" value="EM"/>
    <property type="resolution" value="2.24 A"/>
    <property type="chains" value="C=1-112"/>
</dbReference>
<dbReference type="PDBsum" id="7QRU"/>
<dbReference type="EMDB" id="EMD-14124"/>
<dbReference type="SMR" id="Q9RGZ3"/>
<dbReference type="STRING" id="398511.BpOF4_13200"/>
<dbReference type="KEGG" id="bpf:BpOF4_13200"/>
<dbReference type="eggNOG" id="COG1006">
    <property type="taxonomic scope" value="Bacteria"/>
</dbReference>
<dbReference type="HOGENOM" id="CLU_082058_3_1_9"/>
<dbReference type="Proteomes" id="UP000001544">
    <property type="component" value="Chromosome"/>
</dbReference>
<dbReference type="GO" id="GO:0005886">
    <property type="term" value="C:plasma membrane"/>
    <property type="evidence" value="ECO:0007669"/>
    <property type="project" value="UniProtKB-SubCell"/>
</dbReference>
<dbReference type="GO" id="GO:0015297">
    <property type="term" value="F:antiporter activity"/>
    <property type="evidence" value="ECO:0007669"/>
    <property type="project" value="UniProtKB-KW"/>
</dbReference>
<dbReference type="GO" id="GO:1902600">
    <property type="term" value="P:proton transmembrane transport"/>
    <property type="evidence" value="ECO:0007669"/>
    <property type="project" value="UniProtKB-KW"/>
</dbReference>
<dbReference type="GO" id="GO:0006814">
    <property type="term" value="P:sodium ion transport"/>
    <property type="evidence" value="ECO:0007669"/>
    <property type="project" value="UniProtKB-KW"/>
</dbReference>
<dbReference type="Gene3D" id="1.10.287.3510">
    <property type="match status" value="1"/>
</dbReference>
<dbReference type="InterPro" id="IPR050601">
    <property type="entry name" value="CPA3_antiporter_subunitC"/>
</dbReference>
<dbReference type="InterPro" id="IPR039428">
    <property type="entry name" value="NUOK/Mnh_C1-like"/>
</dbReference>
<dbReference type="NCBIfam" id="NF006372">
    <property type="entry name" value="PRK08600.1"/>
    <property type="match status" value="1"/>
</dbReference>
<dbReference type="NCBIfam" id="NF009303">
    <property type="entry name" value="PRK12660.1"/>
    <property type="match status" value="1"/>
</dbReference>
<dbReference type="PANTHER" id="PTHR34583">
    <property type="entry name" value="ANTIPORTER SUBUNIT MNHC2-RELATED"/>
    <property type="match status" value="1"/>
</dbReference>
<dbReference type="PANTHER" id="PTHR34583:SF2">
    <property type="entry name" value="ANTIPORTER SUBUNIT MNHC2-RELATED"/>
    <property type="match status" value="1"/>
</dbReference>
<dbReference type="Pfam" id="PF00420">
    <property type="entry name" value="Oxidored_q2"/>
    <property type="match status" value="1"/>
</dbReference>
<gene>
    <name type="primary">mrpC</name>
    <name type="ordered locus">BpOF4_13200</name>
</gene>
<organism>
    <name type="scientific">Alkalihalophilus pseudofirmus (strain ATCC BAA-2126 / JCM 17055 / OF4)</name>
    <name type="common">Bacillus pseudofirmus</name>
    <dbReference type="NCBI Taxonomy" id="398511"/>
    <lineage>
        <taxon>Bacteria</taxon>
        <taxon>Bacillati</taxon>
        <taxon>Bacillota</taxon>
        <taxon>Bacilli</taxon>
        <taxon>Bacillales</taxon>
        <taxon>Bacillaceae</taxon>
        <taxon>Alkalihalophilus</taxon>
    </lineage>
</organism>
<accession>Q9RGZ3</accession>
<accession>D3FXI0</accession>